<gene>
    <name evidence="1" type="primary">atpF</name>
    <name type="ordered locus">Hlac_0280</name>
</gene>
<evidence type="ECO:0000255" key="1">
    <source>
        <dbReference type="HAMAP-Rule" id="MF_00312"/>
    </source>
</evidence>
<name>AATF_HALLT</name>
<protein>
    <recommendedName>
        <fullName evidence="1">A-type ATP synthase subunit F</fullName>
    </recommendedName>
</protein>
<proteinExistence type="inferred from homology"/>
<organism>
    <name type="scientific">Halorubrum lacusprofundi (strain ATCC 49239 / DSM 5036 / JCM 8891 / ACAM 34)</name>
    <dbReference type="NCBI Taxonomy" id="416348"/>
    <lineage>
        <taxon>Archaea</taxon>
        <taxon>Methanobacteriati</taxon>
        <taxon>Methanobacteriota</taxon>
        <taxon>Stenosarchaea group</taxon>
        <taxon>Halobacteria</taxon>
        <taxon>Halobacteriales</taxon>
        <taxon>Haloferacaceae</taxon>
        <taxon>Halorubrum</taxon>
    </lineage>
</organism>
<sequence length="109" mass="11756">MSQEIAVVGSPEFTTGFRLAGVRKFENIPDDEKDERLDDAVERTLDDEGTGIIVMHTDDLDHLSRGTREAVEGSIEPVLVTLGGSGAGSGGLRDQIKRAIGIDLMEEDD</sequence>
<reference key="1">
    <citation type="journal article" date="2016" name="Stand. Genomic Sci.">
        <title>Complete genome sequence of the Antarctic Halorubrum lacusprofundi type strain ACAM 34.</title>
        <authorList>
            <person name="Anderson I.J."/>
            <person name="DasSarma P."/>
            <person name="Lucas S."/>
            <person name="Copeland A."/>
            <person name="Lapidus A."/>
            <person name="Del Rio T.G."/>
            <person name="Tice H."/>
            <person name="Dalin E."/>
            <person name="Bruce D.C."/>
            <person name="Goodwin L."/>
            <person name="Pitluck S."/>
            <person name="Sims D."/>
            <person name="Brettin T.S."/>
            <person name="Detter J.C."/>
            <person name="Han C.S."/>
            <person name="Larimer F."/>
            <person name="Hauser L."/>
            <person name="Land M."/>
            <person name="Ivanova N."/>
            <person name="Richardson P."/>
            <person name="Cavicchioli R."/>
            <person name="DasSarma S."/>
            <person name="Woese C.R."/>
            <person name="Kyrpides N.C."/>
        </authorList>
    </citation>
    <scope>NUCLEOTIDE SEQUENCE [LARGE SCALE GENOMIC DNA]</scope>
    <source>
        <strain>ATCC 49239 / DSM 5036 / JCM 8891 / ACAM 34</strain>
    </source>
</reference>
<keyword id="KW-0066">ATP synthesis</keyword>
<keyword id="KW-1003">Cell membrane</keyword>
<keyword id="KW-0375">Hydrogen ion transport</keyword>
<keyword id="KW-0406">Ion transport</keyword>
<keyword id="KW-0472">Membrane</keyword>
<keyword id="KW-1185">Reference proteome</keyword>
<keyword id="KW-0813">Transport</keyword>
<comment type="function">
    <text evidence="1">Component of the A-type ATP synthase that produces ATP from ADP in the presence of a proton gradient across the membrane.</text>
</comment>
<comment type="subunit">
    <text evidence="1">Has multiple subunits with at least A(3), B(3), C, D, E, F, H, I and proteolipid K(x).</text>
</comment>
<comment type="subcellular location">
    <subcellularLocation>
        <location evidence="1">Cell membrane</location>
        <topology evidence="1">Peripheral membrane protein</topology>
    </subcellularLocation>
</comment>
<comment type="similarity">
    <text evidence="1">Belongs to the V-ATPase F subunit family.</text>
</comment>
<accession>B9LS40</accession>
<feature type="chain" id="PRO_1000132899" description="A-type ATP synthase subunit F">
    <location>
        <begin position="1"/>
        <end position="109"/>
    </location>
</feature>
<dbReference type="EMBL" id="CP001365">
    <property type="protein sequence ID" value="ACM55885.1"/>
    <property type="molecule type" value="Genomic_DNA"/>
</dbReference>
<dbReference type="RefSeq" id="WP_012659526.1">
    <property type="nucleotide sequence ID" value="NC_012029.1"/>
</dbReference>
<dbReference type="SMR" id="B9LS40"/>
<dbReference type="GeneID" id="7401206"/>
<dbReference type="KEGG" id="hla:Hlac_0280"/>
<dbReference type="eggNOG" id="arCOG04102">
    <property type="taxonomic scope" value="Archaea"/>
</dbReference>
<dbReference type="HOGENOM" id="CLU_135754_2_2_2"/>
<dbReference type="Proteomes" id="UP000000740">
    <property type="component" value="Chromosome 1"/>
</dbReference>
<dbReference type="GO" id="GO:0005886">
    <property type="term" value="C:plasma membrane"/>
    <property type="evidence" value="ECO:0007669"/>
    <property type="project" value="UniProtKB-SubCell"/>
</dbReference>
<dbReference type="GO" id="GO:0005524">
    <property type="term" value="F:ATP binding"/>
    <property type="evidence" value="ECO:0007669"/>
    <property type="project" value="UniProtKB-UniRule"/>
</dbReference>
<dbReference type="GO" id="GO:0046933">
    <property type="term" value="F:proton-transporting ATP synthase activity, rotational mechanism"/>
    <property type="evidence" value="ECO:0007669"/>
    <property type="project" value="UniProtKB-UniRule"/>
</dbReference>
<dbReference type="GO" id="GO:0046961">
    <property type="term" value="F:proton-transporting ATPase activity, rotational mechanism"/>
    <property type="evidence" value="ECO:0007669"/>
    <property type="project" value="InterPro"/>
</dbReference>
<dbReference type="GO" id="GO:0042777">
    <property type="term" value="P:proton motive force-driven plasma membrane ATP synthesis"/>
    <property type="evidence" value="ECO:0007669"/>
    <property type="project" value="UniProtKB-UniRule"/>
</dbReference>
<dbReference type="Gene3D" id="3.40.50.10580">
    <property type="entry name" value="ATPase, V1 complex, subunit F"/>
    <property type="match status" value="1"/>
</dbReference>
<dbReference type="HAMAP" id="MF_00312">
    <property type="entry name" value="ATP_synth_F_arch"/>
    <property type="match status" value="1"/>
</dbReference>
<dbReference type="InterPro" id="IPR008218">
    <property type="entry name" value="ATPase_V1-cplx_f_g_su"/>
</dbReference>
<dbReference type="InterPro" id="IPR022944">
    <property type="entry name" value="ATPase_V1-cplx_fsu_bac/arc"/>
</dbReference>
<dbReference type="InterPro" id="IPR036906">
    <property type="entry name" value="ATPase_V1_fsu_sf"/>
</dbReference>
<dbReference type="NCBIfam" id="NF002577">
    <property type="entry name" value="PRK02228.1"/>
    <property type="match status" value="1"/>
</dbReference>
<dbReference type="Pfam" id="PF01990">
    <property type="entry name" value="ATP-synt_F"/>
    <property type="match status" value="1"/>
</dbReference>
<dbReference type="SUPFAM" id="SSF159468">
    <property type="entry name" value="AtpF-like"/>
    <property type="match status" value="1"/>
</dbReference>